<keyword id="KW-1185">Reference proteome</keyword>
<keyword id="KW-0687">Ribonucleoprotein</keyword>
<keyword id="KW-0689">Ribosomal protein</keyword>
<dbReference type="EMBL" id="CP000103">
    <property type="protein sequence ID" value="ABB76066.1"/>
    <property type="molecule type" value="Genomic_DNA"/>
</dbReference>
<dbReference type="RefSeq" id="WP_011382051.1">
    <property type="nucleotide sequence ID" value="NC_007614.1"/>
</dbReference>
<dbReference type="SMR" id="Q2Y5A5"/>
<dbReference type="STRING" id="323848.Nmul_A2779"/>
<dbReference type="KEGG" id="nmu:Nmul_A2779"/>
<dbReference type="eggNOG" id="COG0230">
    <property type="taxonomic scope" value="Bacteria"/>
</dbReference>
<dbReference type="HOGENOM" id="CLU_129938_2_0_4"/>
<dbReference type="Proteomes" id="UP000002718">
    <property type="component" value="Chromosome"/>
</dbReference>
<dbReference type="GO" id="GO:1990904">
    <property type="term" value="C:ribonucleoprotein complex"/>
    <property type="evidence" value="ECO:0007669"/>
    <property type="project" value="UniProtKB-KW"/>
</dbReference>
<dbReference type="GO" id="GO:0005840">
    <property type="term" value="C:ribosome"/>
    <property type="evidence" value="ECO:0007669"/>
    <property type="project" value="UniProtKB-KW"/>
</dbReference>
<dbReference type="GO" id="GO:0003735">
    <property type="term" value="F:structural constituent of ribosome"/>
    <property type="evidence" value="ECO:0007669"/>
    <property type="project" value="InterPro"/>
</dbReference>
<dbReference type="GO" id="GO:0006412">
    <property type="term" value="P:translation"/>
    <property type="evidence" value="ECO:0007669"/>
    <property type="project" value="UniProtKB-UniRule"/>
</dbReference>
<dbReference type="FunFam" id="1.10.287.3980:FF:000001">
    <property type="entry name" value="Mitochondrial ribosomal protein L34"/>
    <property type="match status" value="1"/>
</dbReference>
<dbReference type="Gene3D" id="1.10.287.3980">
    <property type="match status" value="1"/>
</dbReference>
<dbReference type="HAMAP" id="MF_00391">
    <property type="entry name" value="Ribosomal_bL34"/>
    <property type="match status" value="1"/>
</dbReference>
<dbReference type="InterPro" id="IPR000271">
    <property type="entry name" value="Ribosomal_bL34"/>
</dbReference>
<dbReference type="InterPro" id="IPR020939">
    <property type="entry name" value="Ribosomal_bL34_CS"/>
</dbReference>
<dbReference type="NCBIfam" id="TIGR01030">
    <property type="entry name" value="rpmH_bact"/>
    <property type="match status" value="1"/>
</dbReference>
<dbReference type="PANTHER" id="PTHR14503:SF4">
    <property type="entry name" value="LARGE RIBOSOMAL SUBUNIT PROTEIN BL34M"/>
    <property type="match status" value="1"/>
</dbReference>
<dbReference type="PANTHER" id="PTHR14503">
    <property type="entry name" value="MITOCHONDRIAL RIBOSOMAL PROTEIN 34 FAMILY MEMBER"/>
    <property type="match status" value="1"/>
</dbReference>
<dbReference type="Pfam" id="PF00468">
    <property type="entry name" value="Ribosomal_L34"/>
    <property type="match status" value="1"/>
</dbReference>
<dbReference type="PROSITE" id="PS00784">
    <property type="entry name" value="RIBOSOMAL_L34"/>
    <property type="match status" value="1"/>
</dbReference>
<proteinExistence type="inferred from homology"/>
<accession>Q2Y5A5</accession>
<gene>
    <name evidence="1" type="primary">rpmH</name>
    <name type="ordered locus">Nmul_A2779</name>
</gene>
<feature type="chain" id="PRO_1000013387" description="Large ribosomal subunit protein bL34">
    <location>
        <begin position="1"/>
        <end position="45"/>
    </location>
</feature>
<organism>
    <name type="scientific">Nitrosospira multiformis (strain ATCC 25196 / NCIMB 11849 / C 71)</name>
    <dbReference type="NCBI Taxonomy" id="323848"/>
    <lineage>
        <taxon>Bacteria</taxon>
        <taxon>Pseudomonadati</taxon>
        <taxon>Pseudomonadota</taxon>
        <taxon>Betaproteobacteria</taxon>
        <taxon>Nitrosomonadales</taxon>
        <taxon>Nitrosomonadaceae</taxon>
        <taxon>Nitrosospira</taxon>
    </lineage>
</organism>
<reference key="1">
    <citation type="submission" date="2005-08" db="EMBL/GenBank/DDBJ databases">
        <title>Complete sequence of chromosome 1 of Nitrosospira multiformis ATCC 25196.</title>
        <authorList>
            <person name="Copeland A."/>
            <person name="Lucas S."/>
            <person name="Lapidus A."/>
            <person name="Barry K."/>
            <person name="Detter J.C."/>
            <person name="Glavina T."/>
            <person name="Hammon N."/>
            <person name="Israni S."/>
            <person name="Pitluck S."/>
            <person name="Chain P."/>
            <person name="Malfatti S."/>
            <person name="Shin M."/>
            <person name="Vergez L."/>
            <person name="Schmutz J."/>
            <person name="Larimer F."/>
            <person name="Land M."/>
            <person name="Hauser L."/>
            <person name="Kyrpides N."/>
            <person name="Lykidis A."/>
            <person name="Richardson P."/>
        </authorList>
    </citation>
    <scope>NUCLEOTIDE SEQUENCE [LARGE SCALE GENOMIC DNA]</scope>
    <source>
        <strain>ATCC 25196 / NCIMB 11849 / C 71</strain>
    </source>
</reference>
<name>RL34_NITMU</name>
<protein>
    <recommendedName>
        <fullName evidence="1">Large ribosomal subunit protein bL34</fullName>
    </recommendedName>
    <alternativeName>
        <fullName evidence="2">50S ribosomal protein L34</fullName>
    </alternativeName>
</protein>
<evidence type="ECO:0000255" key="1">
    <source>
        <dbReference type="HAMAP-Rule" id="MF_00391"/>
    </source>
</evidence>
<evidence type="ECO:0000305" key="2"/>
<comment type="similarity">
    <text evidence="1">Belongs to the bacterial ribosomal protein bL34 family.</text>
</comment>
<sequence length="45" mass="5166">MKRTYQPSVTRRKRTHGFRVRMKTAGGAAVIRARRAKGRVRLGVQ</sequence>